<protein>
    <recommendedName>
        <fullName>Ciliary neurotrophic factor</fullName>
        <shortName>CNTF</shortName>
    </recommendedName>
</protein>
<organism>
    <name type="scientific">Rattus norvegicus</name>
    <name type="common">Rat</name>
    <dbReference type="NCBI Taxonomy" id="10116"/>
    <lineage>
        <taxon>Eukaryota</taxon>
        <taxon>Metazoa</taxon>
        <taxon>Chordata</taxon>
        <taxon>Craniata</taxon>
        <taxon>Vertebrata</taxon>
        <taxon>Euteleostomi</taxon>
        <taxon>Mammalia</taxon>
        <taxon>Eutheria</taxon>
        <taxon>Euarchontoglires</taxon>
        <taxon>Glires</taxon>
        <taxon>Rodentia</taxon>
        <taxon>Myomorpha</taxon>
        <taxon>Muroidea</taxon>
        <taxon>Muridae</taxon>
        <taxon>Murinae</taxon>
        <taxon>Rattus</taxon>
    </lineage>
</organism>
<feature type="chain" id="PRO_0000149523" description="Ciliary neurotrophic factor">
    <location>
        <begin position="1"/>
        <end position="200"/>
    </location>
</feature>
<dbReference type="EMBL" id="X17457">
    <property type="protein sequence ID" value="CAA35500.1"/>
    <property type="molecule type" value="mRNA"/>
</dbReference>
<dbReference type="PIR" id="S08144">
    <property type="entry name" value="UNRTCF"/>
</dbReference>
<dbReference type="RefSeq" id="NP_037298.1">
    <property type="nucleotide sequence ID" value="NM_013166.1"/>
</dbReference>
<dbReference type="SMR" id="P20294"/>
<dbReference type="FunCoup" id="P20294">
    <property type="interactions" value="14"/>
</dbReference>
<dbReference type="STRING" id="10116.ENSRNOP00000016690"/>
<dbReference type="PhosphoSitePlus" id="P20294"/>
<dbReference type="PaxDb" id="10116-ENSRNOP00000016690"/>
<dbReference type="GeneID" id="25707"/>
<dbReference type="KEGG" id="rno:25707"/>
<dbReference type="UCSC" id="RGD:2370">
    <property type="organism name" value="rat"/>
</dbReference>
<dbReference type="AGR" id="RGD:2370"/>
<dbReference type="CTD" id="1270"/>
<dbReference type="RGD" id="2370">
    <property type="gene designation" value="Cntf"/>
</dbReference>
<dbReference type="eggNOG" id="ENOG502S4XX">
    <property type="taxonomic scope" value="Eukaryota"/>
</dbReference>
<dbReference type="InParanoid" id="P20294"/>
<dbReference type="PhylomeDB" id="P20294"/>
<dbReference type="Reactome" id="R-RNO-6788467">
    <property type="pathway name" value="IL-6-type cytokine receptor ligand interactions"/>
</dbReference>
<dbReference type="PRO" id="PR:P20294"/>
<dbReference type="Proteomes" id="UP000002494">
    <property type="component" value="Unplaced"/>
</dbReference>
<dbReference type="GO" id="GO:0030424">
    <property type="term" value="C:axon"/>
    <property type="evidence" value="ECO:0000314"/>
    <property type="project" value="RGD"/>
</dbReference>
<dbReference type="GO" id="GO:0005615">
    <property type="term" value="C:extracellular space"/>
    <property type="evidence" value="ECO:0000266"/>
    <property type="project" value="RGD"/>
</dbReference>
<dbReference type="GO" id="GO:0097386">
    <property type="term" value="C:glial cell projection"/>
    <property type="evidence" value="ECO:0000314"/>
    <property type="project" value="RGD"/>
</dbReference>
<dbReference type="GO" id="GO:0043025">
    <property type="term" value="C:neuronal cell body"/>
    <property type="evidence" value="ECO:0000314"/>
    <property type="project" value="RGD"/>
</dbReference>
<dbReference type="GO" id="GO:0032838">
    <property type="term" value="C:plasma membrane bounded cell projection cytoplasm"/>
    <property type="evidence" value="ECO:0000314"/>
    <property type="project" value="RGD"/>
</dbReference>
<dbReference type="GO" id="GO:0005127">
    <property type="term" value="F:ciliary neurotrophic factor receptor binding"/>
    <property type="evidence" value="ECO:0000353"/>
    <property type="project" value="RGD"/>
</dbReference>
<dbReference type="GO" id="GO:0005125">
    <property type="term" value="F:cytokine activity"/>
    <property type="evidence" value="ECO:0000314"/>
    <property type="project" value="RGD"/>
</dbReference>
<dbReference type="GO" id="GO:0008083">
    <property type="term" value="F:growth factor activity"/>
    <property type="evidence" value="ECO:0000266"/>
    <property type="project" value="RGD"/>
</dbReference>
<dbReference type="GO" id="GO:0005138">
    <property type="term" value="F:interleukin-6 receptor binding"/>
    <property type="evidence" value="ECO:0000266"/>
    <property type="project" value="RGD"/>
</dbReference>
<dbReference type="GO" id="GO:0044877">
    <property type="term" value="F:protein-containing complex binding"/>
    <property type="evidence" value="ECO:0000353"/>
    <property type="project" value="RGD"/>
</dbReference>
<dbReference type="GO" id="GO:0048143">
    <property type="term" value="P:astrocyte activation"/>
    <property type="evidence" value="ECO:0000314"/>
    <property type="project" value="RGD"/>
</dbReference>
<dbReference type="GO" id="GO:0031103">
    <property type="term" value="P:axon regeneration"/>
    <property type="evidence" value="ECO:0000314"/>
    <property type="project" value="UniProtKB"/>
</dbReference>
<dbReference type="GO" id="GO:0007259">
    <property type="term" value="P:cell surface receptor signaling pathway via JAK-STAT"/>
    <property type="evidence" value="ECO:0000314"/>
    <property type="project" value="RGD"/>
</dbReference>
<dbReference type="GO" id="GO:0097696">
    <property type="term" value="P:cell surface receptor signaling pathway via STAT"/>
    <property type="evidence" value="ECO:0000266"/>
    <property type="project" value="RGD"/>
</dbReference>
<dbReference type="GO" id="GO:0070120">
    <property type="term" value="P:ciliary neurotrophic factor-mediated signaling pathway"/>
    <property type="evidence" value="ECO:0000266"/>
    <property type="project" value="RGD"/>
</dbReference>
<dbReference type="GO" id="GO:0060081">
    <property type="term" value="P:membrane hyperpolarization"/>
    <property type="evidence" value="ECO:0000314"/>
    <property type="project" value="RGD"/>
</dbReference>
<dbReference type="GO" id="GO:0048644">
    <property type="term" value="P:muscle organ morphogenesis"/>
    <property type="evidence" value="ECO:0000266"/>
    <property type="project" value="RGD"/>
</dbReference>
<dbReference type="GO" id="GO:0043524">
    <property type="term" value="P:negative regulation of neuron apoptotic process"/>
    <property type="evidence" value="ECO:0000314"/>
    <property type="project" value="RGD"/>
</dbReference>
<dbReference type="GO" id="GO:0046533">
    <property type="term" value="P:negative regulation of photoreceptor cell differentiation"/>
    <property type="evidence" value="ECO:0000266"/>
    <property type="project" value="RGD"/>
</dbReference>
<dbReference type="GO" id="GO:0007399">
    <property type="term" value="P:nervous system development"/>
    <property type="evidence" value="ECO:0000314"/>
    <property type="project" value="RGD"/>
</dbReference>
<dbReference type="GO" id="GO:0048666">
    <property type="term" value="P:neuron development"/>
    <property type="evidence" value="ECO:0000266"/>
    <property type="project" value="RGD"/>
</dbReference>
<dbReference type="GO" id="GO:0048680">
    <property type="term" value="P:positive regulation of axon regeneration"/>
    <property type="evidence" value="ECO:0000314"/>
    <property type="project" value="RGD"/>
</dbReference>
<dbReference type="GO" id="GO:0030307">
    <property type="term" value="P:positive regulation of cell growth"/>
    <property type="evidence" value="ECO:0000314"/>
    <property type="project" value="RGD"/>
</dbReference>
<dbReference type="GO" id="GO:0008284">
    <property type="term" value="P:positive regulation of cell population proliferation"/>
    <property type="evidence" value="ECO:0000314"/>
    <property type="project" value="RGD"/>
</dbReference>
<dbReference type="GO" id="GO:0010628">
    <property type="term" value="P:positive regulation of gene expression"/>
    <property type="evidence" value="ECO:0000266"/>
    <property type="project" value="RGD"/>
</dbReference>
<dbReference type="GO" id="GO:0046887">
    <property type="term" value="P:positive regulation of hormone secretion"/>
    <property type="evidence" value="ECO:0000314"/>
    <property type="project" value="RGD"/>
</dbReference>
<dbReference type="GO" id="GO:0043410">
    <property type="term" value="P:positive regulation of MAPK cascade"/>
    <property type="evidence" value="ECO:0000314"/>
    <property type="project" value="RGD"/>
</dbReference>
<dbReference type="GO" id="GO:0051897">
    <property type="term" value="P:positive regulation of phosphatidylinositol 3-kinase/protein kinase B signal transduction"/>
    <property type="evidence" value="ECO:0000314"/>
    <property type="project" value="RGD"/>
</dbReference>
<dbReference type="GO" id="GO:0046427">
    <property type="term" value="P:positive regulation of receptor signaling pathway via JAK-STAT"/>
    <property type="evidence" value="ECO:0000314"/>
    <property type="project" value="RGD"/>
</dbReference>
<dbReference type="GO" id="GO:0060075">
    <property type="term" value="P:regulation of resting membrane potential"/>
    <property type="evidence" value="ECO:0000314"/>
    <property type="project" value="RGD"/>
</dbReference>
<dbReference type="GO" id="GO:0046668">
    <property type="term" value="P:regulation of retinal cell programmed cell death"/>
    <property type="evidence" value="ECO:0000266"/>
    <property type="project" value="RGD"/>
</dbReference>
<dbReference type="GO" id="GO:0051602">
    <property type="term" value="P:response to electrical stimulus"/>
    <property type="evidence" value="ECO:0000270"/>
    <property type="project" value="RGD"/>
</dbReference>
<dbReference type="GO" id="GO:0009642">
    <property type="term" value="P:response to light intensity"/>
    <property type="evidence" value="ECO:0000270"/>
    <property type="project" value="RGD"/>
</dbReference>
<dbReference type="GO" id="GO:0060221">
    <property type="term" value="P:retinal rod cell differentiation"/>
    <property type="evidence" value="ECO:0000266"/>
    <property type="project" value="RGD"/>
</dbReference>
<dbReference type="FunFam" id="1.20.1250.10:FF:000022">
    <property type="entry name" value="ciliary neurotrophic factor"/>
    <property type="match status" value="1"/>
</dbReference>
<dbReference type="Gene3D" id="1.20.1250.10">
    <property type="match status" value="1"/>
</dbReference>
<dbReference type="InterPro" id="IPR009079">
    <property type="entry name" value="4_helix_cytokine-like_core"/>
</dbReference>
<dbReference type="InterPro" id="IPR000151">
    <property type="entry name" value="Ciliary_neurotrophic_fac_CNTF"/>
</dbReference>
<dbReference type="PANTHER" id="PTHR15196">
    <property type="entry name" value="CILIARY NEUROTROPHIC FACTOR"/>
    <property type="match status" value="1"/>
</dbReference>
<dbReference type="PANTHER" id="PTHR15196:SF0">
    <property type="entry name" value="CILIARY NEUROTROPHIC FACTOR"/>
    <property type="match status" value="1"/>
</dbReference>
<dbReference type="Pfam" id="PF01110">
    <property type="entry name" value="CNTF"/>
    <property type="match status" value="1"/>
</dbReference>
<dbReference type="SUPFAM" id="SSF47266">
    <property type="entry name" value="4-helical cytokines"/>
    <property type="match status" value="1"/>
</dbReference>
<accession>P20294</accession>
<evidence type="ECO:0000305" key="1"/>
<sequence>MAFAEQTPLTLHRRDLCSRSIWLARKIRSDLTALMESYVKHQGLNKNINLDSVDGVPVASTDRWSEMTEAERLQENLQAYRTFQGMLTKLLEDQRVHFTPTEGDFHQAIHTLMLQVSAFAYQLEELMVLLEQKIPENEADGMPATVGDGGLFEKKLWGLKVLQELSQWTVRSIHDLRVISSHQMGISALESHYGAKDKQM</sequence>
<name>CNTF_RAT</name>
<reference key="1">
    <citation type="journal article" date="1989" name="Nature">
        <title>Molecular cloning, expression and regional distribution of rat ciliary neurotrophic factor.</title>
        <authorList>
            <person name="Stoeckli K.A."/>
            <person name="Lottspeich F."/>
            <person name="Sendtner M."/>
            <person name="Masiakowski P."/>
            <person name="Carroll P."/>
            <person name="Goetz R."/>
            <person name="Lindholm D."/>
            <person name="Thoenen H."/>
        </authorList>
    </citation>
    <scope>NUCLEOTIDE SEQUENCE [MRNA]</scope>
    <scope>PARTIAL PROTEIN SEQUENCE</scope>
</reference>
<keyword id="KW-0963">Cytoplasm</keyword>
<keyword id="KW-0217">Developmental protein</keyword>
<keyword id="KW-0221">Differentiation</keyword>
<keyword id="KW-0903">Direct protein sequencing</keyword>
<keyword id="KW-0339">Growth factor</keyword>
<keyword id="KW-0524">Neurogenesis</keyword>
<keyword id="KW-1185">Reference proteome</keyword>
<comment type="function">
    <text>CNTF is a survival factor for various neuronal cell types. Seems to prevent the degeneration of motor axons after axotomy.</text>
</comment>
<comment type="subcellular location">
    <subcellularLocation>
        <location>Cytoplasm</location>
    </subcellularLocation>
</comment>
<comment type="tissue specificity">
    <text>Nervous system.</text>
</comment>
<comment type="similarity">
    <text evidence="1">Belongs to the CNTF family.</text>
</comment>
<gene>
    <name type="primary">Cntf</name>
</gene>
<proteinExistence type="evidence at protein level"/>